<proteinExistence type="inferred from homology"/>
<reference key="1">
    <citation type="submission" date="2007-10" db="EMBL/GenBank/DDBJ databases">
        <title>Complete sequence of Shewanella pealeana ATCC 700345.</title>
        <authorList>
            <consortium name="US DOE Joint Genome Institute"/>
            <person name="Copeland A."/>
            <person name="Lucas S."/>
            <person name="Lapidus A."/>
            <person name="Barry K."/>
            <person name="Glavina del Rio T."/>
            <person name="Dalin E."/>
            <person name="Tice H."/>
            <person name="Pitluck S."/>
            <person name="Chertkov O."/>
            <person name="Brettin T."/>
            <person name="Bruce D."/>
            <person name="Detter J.C."/>
            <person name="Han C."/>
            <person name="Schmutz J."/>
            <person name="Larimer F."/>
            <person name="Land M."/>
            <person name="Hauser L."/>
            <person name="Kyrpides N."/>
            <person name="Kim E."/>
            <person name="Zhao J.-S.Z."/>
            <person name="Manno D."/>
            <person name="Hawari J."/>
            <person name="Richardson P."/>
        </authorList>
    </citation>
    <scope>NUCLEOTIDE SEQUENCE [LARGE SCALE GENOMIC DNA]</scope>
    <source>
        <strain>ATCC 700345 / ANG-SQ1</strain>
    </source>
</reference>
<evidence type="ECO:0000255" key="1">
    <source>
        <dbReference type="HAMAP-Rule" id="MF_00730"/>
    </source>
</evidence>
<gene>
    <name type="ordered locus">Spea_1765</name>
</gene>
<feature type="chain" id="PRO_1000083333" description="Nucleoid-associated protein Spea_1765">
    <location>
        <begin position="1"/>
        <end position="342"/>
    </location>
</feature>
<comment type="subcellular location">
    <subcellularLocation>
        <location evidence="1">Cytoplasm</location>
        <location evidence="1">Nucleoid</location>
    </subcellularLocation>
</comment>
<comment type="similarity">
    <text evidence="1">Belongs to the YejK family.</text>
</comment>
<organism>
    <name type="scientific">Shewanella pealeana (strain ATCC 700345 / ANG-SQ1)</name>
    <dbReference type="NCBI Taxonomy" id="398579"/>
    <lineage>
        <taxon>Bacteria</taxon>
        <taxon>Pseudomonadati</taxon>
        <taxon>Pseudomonadota</taxon>
        <taxon>Gammaproteobacteria</taxon>
        <taxon>Alteromonadales</taxon>
        <taxon>Shewanellaceae</taxon>
        <taxon>Shewanella</taxon>
    </lineage>
</organism>
<name>NDPA_SHEPA</name>
<keyword id="KW-0963">Cytoplasm</keyword>
<keyword id="KW-1185">Reference proteome</keyword>
<sequence length="342" mass="38073">MSINVEQAIIHSISQDGEGQLSCRLRPQPLLNSQAVEAMLEELHQTYTTKAGKGFGHFGINGEDGEANTKFEEALTTYRSGELGFVEFSGIAGKLLQEELAKYDFSTGGFLLLSCYTYMTSDYLFVSLLNAKSSMTVLDDMELSQNTHLDLNNVQLAARIDLTEWQADPESKKYISFIRGRAGRKVADFFLDFMGCVEGVNTKAQNKSLMNAVEDFVGNSELTKDERQQARERVFDYCTERCDEGASIQIKDLADELADQGMDSFYDFAQGGNYELEEEFPGDKPTLRQLKKFSGTGGGVTLSFDGQHLGERVIYDPVSDTIIIKGVPANLKDQLDRRLKGE</sequence>
<dbReference type="EMBL" id="CP000851">
    <property type="protein sequence ID" value="ABV87088.1"/>
    <property type="molecule type" value="Genomic_DNA"/>
</dbReference>
<dbReference type="RefSeq" id="WP_012155008.1">
    <property type="nucleotide sequence ID" value="NC_009901.1"/>
</dbReference>
<dbReference type="SMR" id="A8H3F1"/>
<dbReference type="STRING" id="398579.Spea_1765"/>
<dbReference type="KEGG" id="spl:Spea_1765"/>
<dbReference type="eggNOG" id="COG3081">
    <property type="taxonomic scope" value="Bacteria"/>
</dbReference>
<dbReference type="HOGENOM" id="CLU_063050_0_1_6"/>
<dbReference type="OrthoDB" id="9131762at2"/>
<dbReference type="Proteomes" id="UP000002608">
    <property type="component" value="Chromosome"/>
</dbReference>
<dbReference type="GO" id="GO:0043590">
    <property type="term" value="C:bacterial nucleoid"/>
    <property type="evidence" value="ECO:0007669"/>
    <property type="project" value="TreeGrafter"/>
</dbReference>
<dbReference type="GO" id="GO:0005737">
    <property type="term" value="C:cytoplasm"/>
    <property type="evidence" value="ECO:0007669"/>
    <property type="project" value="UniProtKB-UniRule"/>
</dbReference>
<dbReference type="GO" id="GO:0003690">
    <property type="term" value="F:double-stranded DNA binding"/>
    <property type="evidence" value="ECO:0007669"/>
    <property type="project" value="TreeGrafter"/>
</dbReference>
<dbReference type="GO" id="GO:0003727">
    <property type="term" value="F:single-stranded RNA binding"/>
    <property type="evidence" value="ECO:0007669"/>
    <property type="project" value="TreeGrafter"/>
</dbReference>
<dbReference type="HAMAP" id="MF_00730">
    <property type="entry name" value="NdpA"/>
    <property type="match status" value="1"/>
</dbReference>
<dbReference type="InterPro" id="IPR007358">
    <property type="entry name" value="Nucleoid_associated_NdpA"/>
</dbReference>
<dbReference type="NCBIfam" id="NF001557">
    <property type="entry name" value="PRK00378.1"/>
    <property type="match status" value="1"/>
</dbReference>
<dbReference type="PANTHER" id="PTHR38772">
    <property type="match status" value="1"/>
</dbReference>
<dbReference type="PANTHER" id="PTHR38772:SF1">
    <property type="entry name" value="NUCLEOID-ASSOCIATED PROTEIN YEJK"/>
    <property type="match status" value="1"/>
</dbReference>
<dbReference type="Pfam" id="PF04245">
    <property type="entry name" value="NA37"/>
    <property type="match status" value="1"/>
</dbReference>
<protein>
    <recommendedName>
        <fullName evidence="1">Nucleoid-associated protein Spea_1765</fullName>
    </recommendedName>
</protein>
<accession>A8H3F1</accession>